<name>ILVC_STAAT</name>
<dbReference type="EC" id="1.1.1.86" evidence="1"/>
<dbReference type="EMBL" id="CP000730">
    <property type="protein sequence ID" value="ABX30048.1"/>
    <property type="molecule type" value="Genomic_DNA"/>
</dbReference>
<dbReference type="RefSeq" id="WP_000214557.1">
    <property type="nucleotide sequence ID" value="NC_010079.1"/>
</dbReference>
<dbReference type="SMR" id="A8Z4V9"/>
<dbReference type="KEGG" id="sax:USA300HOU_2051"/>
<dbReference type="HOGENOM" id="CLU_033821_0_1_9"/>
<dbReference type="UniPathway" id="UPA00047">
    <property type="reaction ID" value="UER00056"/>
</dbReference>
<dbReference type="UniPathway" id="UPA00049">
    <property type="reaction ID" value="UER00060"/>
</dbReference>
<dbReference type="GO" id="GO:0005829">
    <property type="term" value="C:cytosol"/>
    <property type="evidence" value="ECO:0007669"/>
    <property type="project" value="TreeGrafter"/>
</dbReference>
<dbReference type="GO" id="GO:0004455">
    <property type="term" value="F:ketol-acid reductoisomerase activity"/>
    <property type="evidence" value="ECO:0007669"/>
    <property type="project" value="UniProtKB-UniRule"/>
</dbReference>
<dbReference type="GO" id="GO:0000287">
    <property type="term" value="F:magnesium ion binding"/>
    <property type="evidence" value="ECO:0007669"/>
    <property type="project" value="UniProtKB-UniRule"/>
</dbReference>
<dbReference type="GO" id="GO:0050661">
    <property type="term" value="F:NADP binding"/>
    <property type="evidence" value="ECO:0007669"/>
    <property type="project" value="InterPro"/>
</dbReference>
<dbReference type="GO" id="GO:0009097">
    <property type="term" value="P:isoleucine biosynthetic process"/>
    <property type="evidence" value="ECO:0007669"/>
    <property type="project" value="UniProtKB-UniRule"/>
</dbReference>
<dbReference type="GO" id="GO:0009099">
    <property type="term" value="P:L-valine biosynthetic process"/>
    <property type="evidence" value="ECO:0007669"/>
    <property type="project" value="UniProtKB-UniRule"/>
</dbReference>
<dbReference type="FunFam" id="3.40.50.720:FF:000023">
    <property type="entry name" value="Ketol-acid reductoisomerase (NADP(+))"/>
    <property type="match status" value="1"/>
</dbReference>
<dbReference type="Gene3D" id="6.10.240.10">
    <property type="match status" value="1"/>
</dbReference>
<dbReference type="Gene3D" id="3.40.50.720">
    <property type="entry name" value="NAD(P)-binding Rossmann-like Domain"/>
    <property type="match status" value="1"/>
</dbReference>
<dbReference type="HAMAP" id="MF_00435">
    <property type="entry name" value="IlvC"/>
    <property type="match status" value="1"/>
</dbReference>
<dbReference type="InterPro" id="IPR008927">
    <property type="entry name" value="6-PGluconate_DH-like_C_sf"/>
</dbReference>
<dbReference type="InterPro" id="IPR013023">
    <property type="entry name" value="KARI"/>
</dbReference>
<dbReference type="InterPro" id="IPR000506">
    <property type="entry name" value="KARI_C"/>
</dbReference>
<dbReference type="InterPro" id="IPR013116">
    <property type="entry name" value="KARI_N"/>
</dbReference>
<dbReference type="InterPro" id="IPR014359">
    <property type="entry name" value="KARI_prok"/>
</dbReference>
<dbReference type="InterPro" id="IPR036291">
    <property type="entry name" value="NAD(P)-bd_dom_sf"/>
</dbReference>
<dbReference type="NCBIfam" id="TIGR00465">
    <property type="entry name" value="ilvC"/>
    <property type="match status" value="1"/>
</dbReference>
<dbReference type="NCBIfam" id="NF004017">
    <property type="entry name" value="PRK05479.1"/>
    <property type="match status" value="1"/>
</dbReference>
<dbReference type="NCBIfam" id="NF009940">
    <property type="entry name" value="PRK13403.1"/>
    <property type="match status" value="1"/>
</dbReference>
<dbReference type="PANTHER" id="PTHR21371">
    <property type="entry name" value="KETOL-ACID REDUCTOISOMERASE, MITOCHONDRIAL"/>
    <property type="match status" value="1"/>
</dbReference>
<dbReference type="PANTHER" id="PTHR21371:SF1">
    <property type="entry name" value="KETOL-ACID REDUCTOISOMERASE, MITOCHONDRIAL"/>
    <property type="match status" value="1"/>
</dbReference>
<dbReference type="Pfam" id="PF01450">
    <property type="entry name" value="KARI_C"/>
    <property type="match status" value="1"/>
</dbReference>
<dbReference type="Pfam" id="PF07991">
    <property type="entry name" value="KARI_N"/>
    <property type="match status" value="1"/>
</dbReference>
<dbReference type="PIRSF" id="PIRSF000116">
    <property type="entry name" value="IlvC_gammaproteo"/>
    <property type="match status" value="1"/>
</dbReference>
<dbReference type="SUPFAM" id="SSF48179">
    <property type="entry name" value="6-phosphogluconate dehydrogenase C-terminal domain-like"/>
    <property type="match status" value="1"/>
</dbReference>
<dbReference type="SUPFAM" id="SSF51735">
    <property type="entry name" value="NAD(P)-binding Rossmann-fold domains"/>
    <property type="match status" value="1"/>
</dbReference>
<dbReference type="PROSITE" id="PS51851">
    <property type="entry name" value="KARI_C"/>
    <property type="match status" value="1"/>
</dbReference>
<dbReference type="PROSITE" id="PS51850">
    <property type="entry name" value="KARI_N"/>
    <property type="match status" value="1"/>
</dbReference>
<keyword id="KW-0028">Amino-acid biosynthesis</keyword>
<keyword id="KW-0100">Branched-chain amino acid biosynthesis</keyword>
<keyword id="KW-0460">Magnesium</keyword>
<keyword id="KW-0479">Metal-binding</keyword>
<keyword id="KW-0521">NADP</keyword>
<keyword id="KW-0560">Oxidoreductase</keyword>
<gene>
    <name evidence="1" type="primary">ilvC</name>
    <name type="ordered locus">USA300HOU_2051</name>
</gene>
<protein>
    <recommendedName>
        <fullName evidence="1">Ketol-acid reductoisomerase (NADP(+))</fullName>
        <shortName evidence="1">KARI</shortName>
        <ecNumber evidence="1">1.1.1.86</ecNumber>
    </recommendedName>
    <alternativeName>
        <fullName evidence="1">Acetohydroxy-acid isomeroreductase</fullName>
        <shortName evidence="1">AHIR</shortName>
    </alternativeName>
    <alternativeName>
        <fullName evidence="1">Alpha-keto-beta-hydroxylacyl reductoisomerase</fullName>
    </alternativeName>
    <alternativeName>
        <fullName evidence="1">Ketol-acid reductoisomerase type 1</fullName>
    </alternativeName>
    <alternativeName>
        <fullName evidence="1">Ketol-acid reductoisomerase type I</fullName>
    </alternativeName>
</protein>
<organism>
    <name type="scientific">Staphylococcus aureus (strain USA300 / TCH1516)</name>
    <dbReference type="NCBI Taxonomy" id="451516"/>
    <lineage>
        <taxon>Bacteria</taxon>
        <taxon>Bacillati</taxon>
        <taxon>Bacillota</taxon>
        <taxon>Bacilli</taxon>
        <taxon>Bacillales</taxon>
        <taxon>Staphylococcaceae</taxon>
        <taxon>Staphylococcus</taxon>
    </lineage>
</organism>
<comment type="function">
    <text evidence="1">Involved in the biosynthesis of branched-chain amino acids (BCAA). Catalyzes an alkyl-migration followed by a ketol-acid reduction of (S)-2-acetolactate (S2AL) to yield (R)-2,3-dihydroxy-isovalerate. In the isomerase reaction, S2AL is rearranged via a Mg-dependent methyl migration to produce 3-hydroxy-3-methyl-2-ketobutyrate (HMKB). In the reductase reaction, this 2-ketoacid undergoes a metal-dependent reduction by NADPH to yield (R)-2,3-dihydroxy-isovalerate.</text>
</comment>
<comment type="catalytic activity">
    <reaction evidence="1">
        <text>(2R)-2,3-dihydroxy-3-methylbutanoate + NADP(+) = (2S)-2-acetolactate + NADPH + H(+)</text>
        <dbReference type="Rhea" id="RHEA:22068"/>
        <dbReference type="ChEBI" id="CHEBI:15378"/>
        <dbReference type="ChEBI" id="CHEBI:49072"/>
        <dbReference type="ChEBI" id="CHEBI:57783"/>
        <dbReference type="ChEBI" id="CHEBI:58349"/>
        <dbReference type="ChEBI" id="CHEBI:58476"/>
        <dbReference type="EC" id="1.1.1.86"/>
    </reaction>
</comment>
<comment type="catalytic activity">
    <reaction evidence="1">
        <text>(2R,3R)-2,3-dihydroxy-3-methylpentanoate + NADP(+) = (S)-2-ethyl-2-hydroxy-3-oxobutanoate + NADPH + H(+)</text>
        <dbReference type="Rhea" id="RHEA:13493"/>
        <dbReference type="ChEBI" id="CHEBI:15378"/>
        <dbReference type="ChEBI" id="CHEBI:49256"/>
        <dbReference type="ChEBI" id="CHEBI:49258"/>
        <dbReference type="ChEBI" id="CHEBI:57783"/>
        <dbReference type="ChEBI" id="CHEBI:58349"/>
        <dbReference type="EC" id="1.1.1.86"/>
    </reaction>
</comment>
<comment type="cofactor">
    <cofactor evidence="1">
        <name>Mg(2+)</name>
        <dbReference type="ChEBI" id="CHEBI:18420"/>
    </cofactor>
    <text evidence="1">Binds 2 magnesium ions per subunit.</text>
</comment>
<comment type="pathway">
    <text evidence="1">Amino-acid biosynthesis; L-isoleucine biosynthesis; L-isoleucine from 2-oxobutanoate: step 2/4.</text>
</comment>
<comment type="pathway">
    <text evidence="1">Amino-acid biosynthesis; L-valine biosynthesis; L-valine from pyruvate: step 2/4.</text>
</comment>
<comment type="similarity">
    <text evidence="1">Belongs to the ketol-acid reductoisomerase family.</text>
</comment>
<reference key="1">
    <citation type="journal article" date="2007" name="BMC Microbiol.">
        <title>Subtle genetic changes enhance virulence of methicillin resistant and sensitive Staphylococcus aureus.</title>
        <authorList>
            <person name="Highlander S.K."/>
            <person name="Hulten K.G."/>
            <person name="Qin X."/>
            <person name="Jiang H."/>
            <person name="Yerrapragada S."/>
            <person name="Mason E.O. Jr."/>
            <person name="Shang Y."/>
            <person name="Williams T.M."/>
            <person name="Fortunov R.M."/>
            <person name="Liu Y."/>
            <person name="Igboeli O."/>
            <person name="Petrosino J."/>
            <person name="Tirumalai M."/>
            <person name="Uzman A."/>
            <person name="Fox G.E."/>
            <person name="Cardenas A.M."/>
            <person name="Muzny D.M."/>
            <person name="Hemphill L."/>
            <person name="Ding Y."/>
            <person name="Dugan S."/>
            <person name="Blyth P.R."/>
            <person name="Buhay C.J."/>
            <person name="Dinh H.H."/>
            <person name="Hawes A.C."/>
            <person name="Holder M."/>
            <person name="Kovar C.L."/>
            <person name="Lee S.L."/>
            <person name="Liu W."/>
            <person name="Nazareth L.V."/>
            <person name="Wang Q."/>
            <person name="Zhou J."/>
            <person name="Kaplan S.L."/>
            <person name="Weinstock G.M."/>
        </authorList>
    </citation>
    <scope>NUCLEOTIDE SEQUENCE [LARGE SCALE GENOMIC DNA]</scope>
    <source>
        <strain>USA300 / TCH1516</strain>
    </source>
</reference>
<accession>A8Z4V9</accession>
<sequence>MTTVYYDQDVKTDALQGKKIAVVGYGSQGHAHAQNLKDNGYDVVIGIRPGRSFDKAKEDGFDVFPVAEAVKQADVIMVLLPDEIQGDVYKNEIEPNLEKHNALAFAHGFNIHFGVIQPPADVDVFLVAPKGPGHLVRRTFVEGSAVPSLFGIQQGASGQARNIALSYAKGIGATRAGVIETTFKEETETDLFGEQAVLCGGVSKLIQSGFETLVEAGYQPELAYFEVLHEMKLIVDLMYEGGMENVRYSISNTAEFGDYVSGPRVITPDVKENMKAVLTDIQNGNFSNRFIEDNKNGFKEFYKLREEQHGHQIEKVGRELREMMPFIKSKSIEK</sequence>
<proteinExistence type="inferred from homology"/>
<evidence type="ECO:0000255" key="1">
    <source>
        <dbReference type="HAMAP-Rule" id="MF_00435"/>
    </source>
</evidence>
<evidence type="ECO:0000255" key="2">
    <source>
        <dbReference type="PROSITE-ProRule" id="PRU01197"/>
    </source>
</evidence>
<evidence type="ECO:0000255" key="3">
    <source>
        <dbReference type="PROSITE-ProRule" id="PRU01198"/>
    </source>
</evidence>
<feature type="chain" id="PRO_1000080649" description="Ketol-acid reductoisomerase (NADP(+))">
    <location>
        <begin position="1"/>
        <end position="334"/>
    </location>
</feature>
<feature type="domain" description="KARI N-terminal Rossmann" evidence="2">
    <location>
        <begin position="1"/>
        <end position="181"/>
    </location>
</feature>
<feature type="domain" description="KARI C-terminal knotted" evidence="3">
    <location>
        <begin position="182"/>
        <end position="327"/>
    </location>
</feature>
<feature type="active site" evidence="1">
    <location>
        <position position="107"/>
    </location>
</feature>
<feature type="binding site" evidence="1">
    <location>
        <begin position="25"/>
        <end position="28"/>
    </location>
    <ligand>
        <name>NADP(+)</name>
        <dbReference type="ChEBI" id="CHEBI:58349"/>
    </ligand>
</feature>
<feature type="binding site" evidence="1">
    <location>
        <position position="48"/>
    </location>
    <ligand>
        <name>NADP(+)</name>
        <dbReference type="ChEBI" id="CHEBI:58349"/>
    </ligand>
</feature>
<feature type="binding site" evidence="1">
    <location>
        <position position="52"/>
    </location>
    <ligand>
        <name>NADP(+)</name>
        <dbReference type="ChEBI" id="CHEBI:58349"/>
    </ligand>
</feature>
<feature type="binding site" evidence="1">
    <location>
        <begin position="82"/>
        <end position="85"/>
    </location>
    <ligand>
        <name>NADP(+)</name>
        <dbReference type="ChEBI" id="CHEBI:58349"/>
    </ligand>
</feature>
<feature type="binding site" evidence="1">
    <location>
        <position position="133"/>
    </location>
    <ligand>
        <name>NADP(+)</name>
        <dbReference type="ChEBI" id="CHEBI:58349"/>
    </ligand>
</feature>
<feature type="binding site" evidence="1">
    <location>
        <position position="190"/>
    </location>
    <ligand>
        <name>Mg(2+)</name>
        <dbReference type="ChEBI" id="CHEBI:18420"/>
        <label>1</label>
    </ligand>
</feature>
<feature type="binding site" evidence="1">
    <location>
        <position position="190"/>
    </location>
    <ligand>
        <name>Mg(2+)</name>
        <dbReference type="ChEBI" id="CHEBI:18420"/>
        <label>2</label>
    </ligand>
</feature>
<feature type="binding site" evidence="1">
    <location>
        <position position="194"/>
    </location>
    <ligand>
        <name>Mg(2+)</name>
        <dbReference type="ChEBI" id="CHEBI:18420"/>
        <label>1</label>
    </ligand>
</feature>
<feature type="binding site" evidence="1">
    <location>
        <position position="226"/>
    </location>
    <ligand>
        <name>Mg(2+)</name>
        <dbReference type="ChEBI" id="CHEBI:18420"/>
        <label>2</label>
    </ligand>
</feature>
<feature type="binding site" evidence="1">
    <location>
        <position position="230"/>
    </location>
    <ligand>
        <name>Mg(2+)</name>
        <dbReference type="ChEBI" id="CHEBI:18420"/>
        <label>2</label>
    </ligand>
</feature>
<feature type="binding site" evidence="1">
    <location>
        <position position="251"/>
    </location>
    <ligand>
        <name>substrate</name>
    </ligand>
</feature>